<accession>C1DL07</accession>
<dbReference type="EMBL" id="CP001157">
    <property type="protein sequence ID" value="ACO79009.1"/>
    <property type="molecule type" value="Genomic_DNA"/>
</dbReference>
<dbReference type="RefSeq" id="WP_012701396.1">
    <property type="nucleotide sequence ID" value="NC_012560.1"/>
</dbReference>
<dbReference type="SMR" id="C1DL07"/>
<dbReference type="STRING" id="322710.Avin_28370"/>
<dbReference type="EnsemblBacteria" id="ACO79009">
    <property type="protein sequence ID" value="ACO79009"/>
    <property type="gene ID" value="Avin_28370"/>
</dbReference>
<dbReference type="GeneID" id="88185952"/>
<dbReference type="KEGG" id="avn:Avin_28370"/>
<dbReference type="eggNOG" id="COG2915">
    <property type="taxonomic scope" value="Bacteria"/>
</dbReference>
<dbReference type="HOGENOM" id="CLU_098920_0_0_6"/>
<dbReference type="OrthoDB" id="9788031at2"/>
<dbReference type="Proteomes" id="UP000002424">
    <property type="component" value="Chromosome"/>
</dbReference>
<dbReference type="GO" id="GO:0005737">
    <property type="term" value="C:cytoplasm"/>
    <property type="evidence" value="ECO:0007669"/>
    <property type="project" value="UniProtKB-SubCell"/>
</dbReference>
<dbReference type="GO" id="GO:0005886">
    <property type="term" value="C:plasma membrane"/>
    <property type="evidence" value="ECO:0007669"/>
    <property type="project" value="UniProtKB-SubCell"/>
</dbReference>
<dbReference type="Gene3D" id="1.10.3890.10">
    <property type="entry name" value="HflD-like"/>
    <property type="match status" value="1"/>
</dbReference>
<dbReference type="HAMAP" id="MF_00695">
    <property type="entry name" value="HflD_protein"/>
    <property type="match status" value="1"/>
</dbReference>
<dbReference type="InterPro" id="IPR007451">
    <property type="entry name" value="HflD"/>
</dbReference>
<dbReference type="InterPro" id="IPR035932">
    <property type="entry name" value="HflD-like_sf"/>
</dbReference>
<dbReference type="NCBIfam" id="NF001246">
    <property type="entry name" value="PRK00218.1-2"/>
    <property type="match status" value="1"/>
</dbReference>
<dbReference type="NCBIfam" id="NF001247">
    <property type="entry name" value="PRK00218.1-3"/>
    <property type="match status" value="1"/>
</dbReference>
<dbReference type="PANTHER" id="PTHR38100">
    <property type="entry name" value="HIGH FREQUENCY LYSOGENIZATION PROTEIN HFLD"/>
    <property type="match status" value="1"/>
</dbReference>
<dbReference type="PANTHER" id="PTHR38100:SF1">
    <property type="entry name" value="HIGH FREQUENCY LYSOGENIZATION PROTEIN HFLD"/>
    <property type="match status" value="1"/>
</dbReference>
<dbReference type="Pfam" id="PF04356">
    <property type="entry name" value="DUF489"/>
    <property type="match status" value="1"/>
</dbReference>
<dbReference type="SUPFAM" id="SSF101322">
    <property type="entry name" value="YcfC-like"/>
    <property type="match status" value="1"/>
</dbReference>
<sequence>MTPRQEQLIALGAIFESAYLVDRIAKTGLAGEAHLACMLGSLLVRNPKDTLEVYGGDDLNLLDGYRALASALERNPQSLQREPLRYSLALVTLERQLDKRDDMLQLMGRRLDQIQLQVQHLGLTHESVVAAFASLYEDTLSTFRQRIQVHGEMRHLQNPANAARIRALLLAGIRSARLWRQLGGHRWQLVFSRRKLLDELYPLIRRN</sequence>
<evidence type="ECO:0000255" key="1">
    <source>
        <dbReference type="HAMAP-Rule" id="MF_00695"/>
    </source>
</evidence>
<comment type="subcellular location">
    <subcellularLocation>
        <location>Cytoplasm</location>
    </subcellularLocation>
    <subcellularLocation>
        <location evidence="1">Cell inner membrane</location>
        <topology evidence="1">Peripheral membrane protein</topology>
        <orientation evidence="1">Cytoplasmic side</orientation>
    </subcellularLocation>
</comment>
<comment type="similarity">
    <text evidence="1">Belongs to the HflD family.</text>
</comment>
<protein>
    <recommendedName>
        <fullName evidence="1">High frequency lysogenization protein HflD homolog</fullName>
    </recommendedName>
</protein>
<feature type="chain" id="PRO_1000212625" description="High frequency lysogenization protein HflD homolog">
    <location>
        <begin position="1"/>
        <end position="207"/>
    </location>
</feature>
<keyword id="KW-0997">Cell inner membrane</keyword>
<keyword id="KW-1003">Cell membrane</keyword>
<keyword id="KW-0963">Cytoplasm</keyword>
<keyword id="KW-0472">Membrane</keyword>
<organism>
    <name type="scientific">Azotobacter vinelandii (strain DJ / ATCC BAA-1303)</name>
    <dbReference type="NCBI Taxonomy" id="322710"/>
    <lineage>
        <taxon>Bacteria</taxon>
        <taxon>Pseudomonadati</taxon>
        <taxon>Pseudomonadota</taxon>
        <taxon>Gammaproteobacteria</taxon>
        <taxon>Pseudomonadales</taxon>
        <taxon>Pseudomonadaceae</taxon>
        <taxon>Azotobacter</taxon>
    </lineage>
</organism>
<gene>
    <name evidence="1" type="primary">hflD</name>
    <name type="ordered locus">Avin_28370</name>
</gene>
<reference key="1">
    <citation type="journal article" date="2009" name="J. Bacteriol.">
        <title>Genome sequence of Azotobacter vinelandii, an obligate aerobe specialized to support diverse anaerobic metabolic processes.</title>
        <authorList>
            <person name="Setubal J.C."/>
            <person name="Dos Santos P."/>
            <person name="Goldman B.S."/>
            <person name="Ertesvaag H."/>
            <person name="Espin G."/>
            <person name="Rubio L.M."/>
            <person name="Valla S."/>
            <person name="Almeida N.F."/>
            <person name="Balasubramanian D."/>
            <person name="Cromes L."/>
            <person name="Curatti L."/>
            <person name="Du Z."/>
            <person name="Godsy E."/>
            <person name="Goodner B."/>
            <person name="Hellner-Burris K."/>
            <person name="Hernandez J.A."/>
            <person name="Houmiel K."/>
            <person name="Imperial J."/>
            <person name="Kennedy C."/>
            <person name="Larson T.J."/>
            <person name="Latreille P."/>
            <person name="Ligon L.S."/>
            <person name="Lu J."/>
            <person name="Maerk M."/>
            <person name="Miller N.M."/>
            <person name="Norton S."/>
            <person name="O'Carroll I.P."/>
            <person name="Paulsen I."/>
            <person name="Raulfs E.C."/>
            <person name="Roemer R."/>
            <person name="Rosser J."/>
            <person name="Segura D."/>
            <person name="Slater S."/>
            <person name="Stricklin S.L."/>
            <person name="Studholme D.J."/>
            <person name="Sun J."/>
            <person name="Viana C.J."/>
            <person name="Wallin E."/>
            <person name="Wang B."/>
            <person name="Wheeler C."/>
            <person name="Zhu H."/>
            <person name="Dean D.R."/>
            <person name="Dixon R."/>
            <person name="Wood D."/>
        </authorList>
    </citation>
    <scope>NUCLEOTIDE SEQUENCE [LARGE SCALE GENOMIC DNA]</scope>
    <source>
        <strain>DJ / ATCC BAA-1303</strain>
    </source>
</reference>
<proteinExistence type="inferred from homology"/>
<name>HFLD_AZOVD</name>